<evidence type="ECO:0000250" key="1"/>
<evidence type="ECO:0000250" key="2">
    <source>
        <dbReference type="UniProtKB" id="P00157"/>
    </source>
</evidence>
<evidence type="ECO:0000255" key="3">
    <source>
        <dbReference type="PROSITE-ProRule" id="PRU00967"/>
    </source>
</evidence>
<evidence type="ECO:0000255" key="4">
    <source>
        <dbReference type="PROSITE-ProRule" id="PRU00968"/>
    </source>
</evidence>
<keyword id="KW-0249">Electron transport</keyword>
<keyword id="KW-0349">Heme</keyword>
<keyword id="KW-0408">Iron</keyword>
<keyword id="KW-0472">Membrane</keyword>
<keyword id="KW-0479">Metal-binding</keyword>
<keyword id="KW-0496">Mitochondrion</keyword>
<keyword id="KW-0999">Mitochondrion inner membrane</keyword>
<keyword id="KW-0679">Respiratory chain</keyword>
<keyword id="KW-0812">Transmembrane</keyword>
<keyword id="KW-1133">Transmembrane helix</keyword>
<keyword id="KW-0813">Transport</keyword>
<keyword id="KW-0830">Ubiquinone</keyword>
<feature type="chain" id="PRO_0000061518" description="Cytochrome b">
    <location>
        <begin position="1" status="less than"/>
        <end position="199" status="greater than"/>
    </location>
</feature>
<feature type="transmembrane region" description="Helical" evidence="2">
    <location>
        <begin position="1" status="less than"/>
        <end position="8"/>
    </location>
</feature>
<feature type="transmembrane region" description="Helical" evidence="2">
    <location>
        <begin position="32"/>
        <end position="53"/>
    </location>
</feature>
<feature type="transmembrane region" description="Helical" evidence="2">
    <location>
        <begin position="68"/>
        <end position="88"/>
    </location>
</feature>
<feature type="transmembrane region" description="Helical" evidence="2">
    <location>
        <begin position="133"/>
        <end position="153"/>
    </location>
</feature>
<feature type="transmembrane region" description="Helical" evidence="2">
    <location>
        <begin position="181"/>
        <end position="199" status="greater than"/>
    </location>
</feature>
<feature type="binding site" description="axial binding residue" evidence="2">
    <location>
        <position position="38"/>
    </location>
    <ligand>
        <name>heme b</name>
        <dbReference type="ChEBI" id="CHEBI:60344"/>
        <label>b562</label>
    </ligand>
    <ligandPart>
        <name>Fe</name>
        <dbReference type="ChEBI" id="CHEBI:18248"/>
    </ligandPart>
</feature>
<feature type="binding site" description="axial binding residue" evidence="2">
    <location>
        <position position="52"/>
    </location>
    <ligand>
        <name>heme b</name>
        <dbReference type="ChEBI" id="CHEBI:60344"/>
        <label>b566</label>
    </ligand>
    <ligandPart>
        <name>Fe</name>
        <dbReference type="ChEBI" id="CHEBI:18248"/>
    </ligandPart>
</feature>
<feature type="binding site" description="axial binding residue" evidence="2">
    <location>
        <position position="137"/>
    </location>
    <ligand>
        <name>heme b</name>
        <dbReference type="ChEBI" id="CHEBI:60344"/>
        <label>b562</label>
    </ligand>
    <ligandPart>
        <name>Fe</name>
        <dbReference type="ChEBI" id="CHEBI:18248"/>
    </ligandPart>
</feature>
<feature type="binding site" description="axial binding residue" evidence="2">
    <location>
        <position position="151"/>
    </location>
    <ligand>
        <name>heme b</name>
        <dbReference type="ChEBI" id="CHEBI:60344"/>
        <label>b566</label>
    </ligand>
    <ligandPart>
        <name>Fe</name>
        <dbReference type="ChEBI" id="CHEBI:18248"/>
    </ligandPart>
</feature>
<feature type="binding site" evidence="2">
    <location>
        <position position="156"/>
    </location>
    <ligand>
        <name>a ubiquinone</name>
        <dbReference type="ChEBI" id="CHEBI:16389"/>
    </ligand>
</feature>
<feature type="non-terminal residue">
    <location>
        <position position="1"/>
    </location>
</feature>
<feature type="non-terminal residue">
    <location>
        <position position="199"/>
    </location>
</feature>
<reference key="1">
    <citation type="journal article" date="1993" name="Science">
        <title>Evolution of endothermy in fish: mapping physiological traits on a molecular phylogeny.</title>
        <authorList>
            <person name="Block B.A."/>
            <person name="Finnerty J.R."/>
            <person name="Stewart A.F."/>
            <person name="Kidd J."/>
        </authorList>
    </citation>
    <scope>NUCLEOTIDE SEQUENCE [GENOMIC DNA]</scope>
</reference>
<name>CYB_SARCH</name>
<dbReference type="EMBL" id="L11548">
    <property type="protein sequence ID" value="AAA32080.1"/>
    <property type="molecule type" value="Genomic_DNA"/>
</dbReference>
<dbReference type="SMR" id="P34864"/>
<dbReference type="GO" id="GO:0005743">
    <property type="term" value="C:mitochondrial inner membrane"/>
    <property type="evidence" value="ECO:0007669"/>
    <property type="project" value="UniProtKB-SubCell"/>
</dbReference>
<dbReference type="GO" id="GO:0046872">
    <property type="term" value="F:metal ion binding"/>
    <property type="evidence" value="ECO:0007669"/>
    <property type="project" value="UniProtKB-KW"/>
</dbReference>
<dbReference type="GO" id="GO:0008121">
    <property type="term" value="F:ubiquinol-cytochrome-c reductase activity"/>
    <property type="evidence" value="ECO:0007669"/>
    <property type="project" value="TreeGrafter"/>
</dbReference>
<dbReference type="GO" id="GO:0006122">
    <property type="term" value="P:mitochondrial electron transport, ubiquinol to cytochrome c"/>
    <property type="evidence" value="ECO:0007669"/>
    <property type="project" value="TreeGrafter"/>
</dbReference>
<dbReference type="CDD" id="cd00284">
    <property type="entry name" value="Cytochrome_b_N"/>
    <property type="match status" value="1"/>
</dbReference>
<dbReference type="Gene3D" id="1.20.810.10">
    <property type="entry name" value="Cytochrome Bc1 Complex, Chain C"/>
    <property type="match status" value="1"/>
</dbReference>
<dbReference type="InterPro" id="IPR005798">
    <property type="entry name" value="Cyt_b/b6_C"/>
</dbReference>
<dbReference type="InterPro" id="IPR005797">
    <property type="entry name" value="Cyt_b/b6_N"/>
</dbReference>
<dbReference type="InterPro" id="IPR027387">
    <property type="entry name" value="Cytb/b6-like_sf"/>
</dbReference>
<dbReference type="InterPro" id="IPR048259">
    <property type="entry name" value="Cytochrome_b_N_euk/bac"/>
</dbReference>
<dbReference type="InterPro" id="IPR016174">
    <property type="entry name" value="Di-haem_cyt_TM"/>
</dbReference>
<dbReference type="PANTHER" id="PTHR19271">
    <property type="entry name" value="CYTOCHROME B"/>
    <property type="match status" value="1"/>
</dbReference>
<dbReference type="PANTHER" id="PTHR19271:SF16">
    <property type="entry name" value="CYTOCHROME B"/>
    <property type="match status" value="1"/>
</dbReference>
<dbReference type="Pfam" id="PF00033">
    <property type="entry name" value="Cytochrome_B"/>
    <property type="match status" value="1"/>
</dbReference>
<dbReference type="SUPFAM" id="SSF81342">
    <property type="entry name" value="Transmembrane di-heme cytochromes"/>
    <property type="match status" value="1"/>
</dbReference>
<dbReference type="PROSITE" id="PS51003">
    <property type="entry name" value="CYTB_CTER"/>
    <property type="match status" value="1"/>
</dbReference>
<dbReference type="PROSITE" id="PS51002">
    <property type="entry name" value="CYTB_NTER"/>
    <property type="match status" value="1"/>
</dbReference>
<organism>
    <name type="scientific">Sarda chiliensis</name>
    <name type="common">Pacific bonito</name>
    <name type="synonym">Pelamys chiliensis</name>
    <dbReference type="NCBI Taxonomy" id="8231"/>
    <lineage>
        <taxon>Eukaryota</taxon>
        <taxon>Metazoa</taxon>
        <taxon>Chordata</taxon>
        <taxon>Craniata</taxon>
        <taxon>Vertebrata</taxon>
        <taxon>Euteleostomi</taxon>
        <taxon>Actinopterygii</taxon>
        <taxon>Neopterygii</taxon>
        <taxon>Teleostei</taxon>
        <taxon>Neoteleostei</taxon>
        <taxon>Acanthomorphata</taxon>
        <taxon>Pelagiaria</taxon>
        <taxon>Scombriformes</taxon>
        <taxon>Scombridae</taxon>
        <taxon>Sarda</taxon>
    </lineage>
</organism>
<proteinExistence type="inferred from homology"/>
<accession>P34864</accession>
<gene>
    <name type="primary">mt-cyb</name>
    <name type="synonym">cob</name>
    <name type="synonym">cytb</name>
    <name type="synonym">mtcyb</name>
</gene>
<comment type="function">
    <text evidence="2">Component of the ubiquinol-cytochrome c reductase complex (complex III or cytochrome b-c1 complex) that is part of the mitochondrial respiratory chain. The b-c1 complex mediates electron transfer from ubiquinol to cytochrome c. Contributes to the generation of a proton gradient across the mitochondrial membrane that is then used for ATP synthesis.</text>
</comment>
<comment type="cofactor">
    <cofactor evidence="2">
        <name>heme b</name>
        <dbReference type="ChEBI" id="CHEBI:60344"/>
    </cofactor>
    <text evidence="2">Binds 2 heme b groups non-covalently.</text>
</comment>
<comment type="subunit">
    <text evidence="2">The cytochrome bc1 complex contains 3 respiratory subunits (MT-CYB, CYC1 and UQCRFS1), 2 core proteins (UQCRC1 and UQCRC2) and probably 6 low-molecular weight proteins.</text>
</comment>
<comment type="subcellular location">
    <subcellularLocation>
        <location evidence="2">Mitochondrion inner membrane</location>
        <topology evidence="2">Multi-pass membrane protein</topology>
    </subcellularLocation>
</comment>
<comment type="miscellaneous">
    <text evidence="1">Heme 1 (or BL or b562) is low-potential and absorbs at about 562 nm, and heme 2 (or BH or b566) is high-potential and absorbs at about 566 nm.</text>
</comment>
<comment type="similarity">
    <text evidence="3 4">Belongs to the cytochrome b family.</text>
</comment>
<comment type="caution">
    <text evidence="2">The full-length protein contains only eight transmembrane helices, not nine as predicted by bioinformatics tools.</text>
</comment>
<sequence length="199" mass="22379">LTGLFLAMHYTPDVESAFASVAHICRDVNFGWLIRNLHANGASFFFICIYFHIGRGLYYGSYLYKETWNIGVVLLLLVMMTAFVGYVLPWGQMSFWGATVITNLLSAVPYVGTTLVEWIWGGFSVDNATLTRFFAFHFLFPFVILAMTILHLLFLHETGSNNPIGLNSNADKISFHPYFSYKDLLGFAILLVALASLAH</sequence>
<geneLocation type="mitochondrion"/>
<protein>
    <recommendedName>
        <fullName>Cytochrome b</fullName>
    </recommendedName>
    <alternativeName>
        <fullName>Complex III subunit 3</fullName>
    </alternativeName>
    <alternativeName>
        <fullName>Complex III subunit III</fullName>
    </alternativeName>
    <alternativeName>
        <fullName>Cytochrome b-c1 complex subunit 3</fullName>
    </alternativeName>
    <alternativeName>
        <fullName>Ubiquinol-cytochrome-c reductase complex cytochrome b subunit</fullName>
    </alternativeName>
</protein>